<evidence type="ECO:0000305" key="1"/>
<evidence type="ECO:0007829" key="2">
    <source>
        <dbReference type="PDB" id="1X25"/>
    </source>
</evidence>
<comment type="similarity">
    <text evidence="1">Belongs to the RutC family.</text>
</comment>
<organism>
    <name type="scientific">Sulfurisphaera tokodaii (strain DSM 16993 / JCM 10545 / NBRC 100140 / 7)</name>
    <name type="common">Sulfolobus tokodaii</name>
    <dbReference type="NCBI Taxonomy" id="273063"/>
    <lineage>
        <taxon>Archaea</taxon>
        <taxon>Thermoproteota</taxon>
        <taxon>Thermoprotei</taxon>
        <taxon>Sulfolobales</taxon>
        <taxon>Sulfolobaceae</taxon>
        <taxon>Sulfurisphaera</taxon>
    </lineage>
</organism>
<dbReference type="EMBL" id="BA000023">
    <property type="protein sequence ID" value="BAB65824.1"/>
    <property type="molecule type" value="Genomic_DNA"/>
</dbReference>
<dbReference type="RefSeq" id="WP_010978807.1">
    <property type="nucleotide sequence ID" value="NC_003106.2"/>
</dbReference>
<dbReference type="PDB" id="1X25">
    <property type="method" value="X-ray"/>
    <property type="resolution" value="2.00 A"/>
    <property type="chains" value="A/B=1-125"/>
</dbReference>
<dbReference type="PDBsum" id="1X25"/>
<dbReference type="SMR" id="Q973T6"/>
<dbReference type="STRING" id="273063.STK_08110"/>
<dbReference type="GeneID" id="1458774"/>
<dbReference type="KEGG" id="sto:STK_08110"/>
<dbReference type="PATRIC" id="fig|273063.9.peg.915"/>
<dbReference type="eggNOG" id="arCOG01630">
    <property type="taxonomic scope" value="Archaea"/>
</dbReference>
<dbReference type="OrthoDB" id="371655at2157"/>
<dbReference type="BRENDA" id="3.5.99.10">
    <property type="organism ID" value="15396"/>
</dbReference>
<dbReference type="EvolutionaryTrace" id="Q973T6"/>
<dbReference type="Proteomes" id="UP000001015">
    <property type="component" value="Chromosome"/>
</dbReference>
<dbReference type="GO" id="GO:0005829">
    <property type="term" value="C:cytosol"/>
    <property type="evidence" value="ECO:0007669"/>
    <property type="project" value="TreeGrafter"/>
</dbReference>
<dbReference type="GO" id="GO:0019239">
    <property type="term" value="F:deaminase activity"/>
    <property type="evidence" value="ECO:0007669"/>
    <property type="project" value="TreeGrafter"/>
</dbReference>
<dbReference type="CDD" id="cd00448">
    <property type="entry name" value="YjgF_YER057c_UK114_family"/>
    <property type="match status" value="1"/>
</dbReference>
<dbReference type="FunFam" id="3.30.1330.40:FF:000001">
    <property type="entry name" value="L-PSP family endoribonuclease"/>
    <property type="match status" value="1"/>
</dbReference>
<dbReference type="Gene3D" id="3.30.1330.40">
    <property type="entry name" value="RutC-like"/>
    <property type="match status" value="1"/>
</dbReference>
<dbReference type="InterPro" id="IPR006056">
    <property type="entry name" value="RidA"/>
</dbReference>
<dbReference type="InterPro" id="IPR019897">
    <property type="entry name" value="RidA_CS"/>
</dbReference>
<dbReference type="InterPro" id="IPR035959">
    <property type="entry name" value="RutC-like_sf"/>
</dbReference>
<dbReference type="InterPro" id="IPR006175">
    <property type="entry name" value="YjgF/YER057c/UK114"/>
</dbReference>
<dbReference type="NCBIfam" id="TIGR00004">
    <property type="entry name" value="Rid family detoxifying hydrolase"/>
    <property type="match status" value="1"/>
</dbReference>
<dbReference type="PANTHER" id="PTHR11803">
    <property type="entry name" value="2-IMINOBUTANOATE/2-IMINOPROPANOATE DEAMINASE RIDA"/>
    <property type="match status" value="1"/>
</dbReference>
<dbReference type="PANTHER" id="PTHR11803:SF39">
    <property type="entry name" value="2-IMINOBUTANOATE_2-IMINOPROPANOATE DEAMINASE"/>
    <property type="match status" value="1"/>
</dbReference>
<dbReference type="Pfam" id="PF01042">
    <property type="entry name" value="Ribonuc_L-PSP"/>
    <property type="match status" value="1"/>
</dbReference>
<dbReference type="SUPFAM" id="SSF55298">
    <property type="entry name" value="YjgF-like"/>
    <property type="match status" value="1"/>
</dbReference>
<dbReference type="PROSITE" id="PS01094">
    <property type="entry name" value="UPF0076"/>
    <property type="match status" value="1"/>
</dbReference>
<proteinExistence type="evidence at protein level"/>
<keyword id="KW-0002">3D-structure</keyword>
<keyword id="KW-1185">Reference proteome</keyword>
<accession>Q973T6</accession>
<gene>
    <name type="ordered locus">STK_08110</name>
</gene>
<name>Y811_SULTO</name>
<feature type="chain" id="PRO_0000170346" description="RutC family protein STK_08110">
    <location>
        <begin position="1"/>
        <end position="125"/>
    </location>
</feature>
<feature type="strand" evidence="2">
    <location>
        <begin position="1"/>
        <end position="4"/>
    </location>
</feature>
<feature type="strand" evidence="2">
    <location>
        <begin position="18"/>
        <end position="22"/>
    </location>
</feature>
<feature type="strand" evidence="2">
    <location>
        <begin position="25"/>
        <end position="31"/>
    </location>
</feature>
<feature type="turn" evidence="2">
    <location>
        <begin position="36"/>
        <end position="38"/>
    </location>
</feature>
<feature type="strand" evidence="2">
    <location>
        <begin position="39"/>
        <end position="41"/>
    </location>
</feature>
<feature type="helix" evidence="2">
    <location>
        <begin position="46"/>
        <end position="63"/>
    </location>
</feature>
<feature type="helix" evidence="2">
    <location>
        <begin position="68"/>
        <end position="70"/>
    </location>
</feature>
<feature type="strand" evidence="2">
    <location>
        <begin position="71"/>
        <end position="79"/>
    </location>
</feature>
<feature type="helix" evidence="2">
    <location>
        <begin position="81"/>
        <end position="83"/>
    </location>
</feature>
<feature type="helix" evidence="2">
    <location>
        <begin position="84"/>
        <end position="94"/>
    </location>
</feature>
<feature type="strand" evidence="2">
    <location>
        <begin position="101"/>
        <end position="106"/>
    </location>
</feature>
<feature type="helix" evidence="2">
    <location>
        <begin position="111"/>
        <end position="113"/>
    </location>
</feature>
<feature type="strand" evidence="2">
    <location>
        <begin position="115"/>
        <end position="123"/>
    </location>
</feature>
<protein>
    <recommendedName>
        <fullName>RutC family protein STK_08110</fullName>
    </recommendedName>
</protein>
<sequence>METVFTEKAPKPVGPYSQAIKVGNTLYVSGQIPIDPRTNEIVKGDIKVQTRQVLDNIKEIVKAAGFSLSDVAMAFVFLKDMNMFNDFNSVYAEYFKDKPPARVTVEVSRLPKDALIEIAVICSKG</sequence>
<reference key="1">
    <citation type="journal article" date="2001" name="DNA Res.">
        <title>Complete genome sequence of an aerobic thermoacidophilic Crenarchaeon, Sulfolobus tokodaii strain7.</title>
        <authorList>
            <person name="Kawarabayasi Y."/>
            <person name="Hino Y."/>
            <person name="Horikawa H."/>
            <person name="Jin-no K."/>
            <person name="Takahashi M."/>
            <person name="Sekine M."/>
            <person name="Baba S."/>
            <person name="Ankai A."/>
            <person name="Kosugi H."/>
            <person name="Hosoyama A."/>
            <person name="Fukui S."/>
            <person name="Nagai Y."/>
            <person name="Nishijima K."/>
            <person name="Otsuka R."/>
            <person name="Nakazawa H."/>
            <person name="Takamiya M."/>
            <person name="Kato Y."/>
            <person name="Yoshizawa T."/>
            <person name="Tanaka T."/>
            <person name="Kudoh Y."/>
            <person name="Yamazaki J."/>
            <person name="Kushida N."/>
            <person name="Oguchi A."/>
            <person name="Aoki K."/>
            <person name="Masuda S."/>
            <person name="Yanagii M."/>
            <person name="Nishimura M."/>
            <person name="Yamagishi A."/>
            <person name="Oshima T."/>
            <person name="Kikuchi H."/>
        </authorList>
    </citation>
    <scope>NUCLEOTIDE SEQUENCE [LARGE SCALE GENOMIC DNA]</scope>
    <source>
        <strain>DSM 16993 / JCM 10545 / NBRC 100140 / 7</strain>
    </source>
</reference>